<feature type="chain" id="PRO_1000055663" description="Large ribosomal subunit protein uL14">
    <location>
        <begin position="1"/>
        <end position="122"/>
    </location>
</feature>
<name>RL14_PELUB</name>
<reference key="1">
    <citation type="journal article" date="2005" name="Science">
        <title>Genome streamlining in a cosmopolitan oceanic bacterium.</title>
        <authorList>
            <person name="Giovannoni S.J."/>
            <person name="Tripp H.J."/>
            <person name="Givan S."/>
            <person name="Podar M."/>
            <person name="Vergin K.L."/>
            <person name="Baptista D."/>
            <person name="Bibbs L."/>
            <person name="Eads J."/>
            <person name="Richardson T.H."/>
            <person name="Noordewier M."/>
            <person name="Rappe M.S."/>
            <person name="Short J.M."/>
            <person name="Carrington J.C."/>
            <person name="Mathur E.J."/>
        </authorList>
    </citation>
    <scope>NUCLEOTIDE SEQUENCE [LARGE SCALE GENOMIC DNA]</scope>
    <source>
        <strain>HTCC1062</strain>
    </source>
</reference>
<protein>
    <recommendedName>
        <fullName evidence="1">Large ribosomal subunit protein uL14</fullName>
    </recommendedName>
    <alternativeName>
        <fullName evidence="2">50S ribosomal protein L14</fullName>
    </alternativeName>
</protein>
<comment type="function">
    <text evidence="1">Binds to 23S rRNA. Forms part of two intersubunit bridges in the 70S ribosome.</text>
</comment>
<comment type="subunit">
    <text evidence="1">Part of the 50S ribosomal subunit. Forms a cluster with proteins L3 and L19. In the 70S ribosome, L14 and L19 interact and together make contacts with the 16S rRNA in bridges B5 and B8.</text>
</comment>
<comment type="similarity">
    <text evidence="1">Belongs to the universal ribosomal protein uL14 family.</text>
</comment>
<organism>
    <name type="scientific">Pelagibacter ubique (strain HTCC1062)</name>
    <dbReference type="NCBI Taxonomy" id="335992"/>
    <lineage>
        <taxon>Bacteria</taxon>
        <taxon>Pseudomonadati</taxon>
        <taxon>Pseudomonadota</taxon>
        <taxon>Alphaproteobacteria</taxon>
        <taxon>Candidatus Pelagibacterales</taxon>
        <taxon>Candidatus Pelagibacteraceae</taxon>
        <taxon>Candidatus Pelagibacter</taxon>
    </lineage>
</organism>
<keyword id="KW-1185">Reference proteome</keyword>
<keyword id="KW-0687">Ribonucleoprotein</keyword>
<keyword id="KW-0689">Ribosomal protein</keyword>
<keyword id="KW-0694">RNA-binding</keyword>
<keyword id="KW-0699">rRNA-binding</keyword>
<gene>
    <name evidence="1" type="primary">rplN</name>
    <name type="ordered locus">SAR11_1107</name>
</gene>
<proteinExistence type="inferred from homology"/>
<accession>Q4FLM8</accession>
<evidence type="ECO:0000255" key="1">
    <source>
        <dbReference type="HAMAP-Rule" id="MF_01367"/>
    </source>
</evidence>
<evidence type="ECO:0000305" key="2"/>
<dbReference type="EMBL" id="CP000084">
    <property type="protein sequence ID" value="AAZ21910.1"/>
    <property type="molecule type" value="Genomic_DNA"/>
</dbReference>
<dbReference type="RefSeq" id="WP_006996821.1">
    <property type="nucleotide sequence ID" value="NC_007205.1"/>
</dbReference>
<dbReference type="SMR" id="Q4FLM8"/>
<dbReference type="STRING" id="335992.SAR11_1107"/>
<dbReference type="GeneID" id="66295596"/>
<dbReference type="KEGG" id="pub:SAR11_1107"/>
<dbReference type="eggNOG" id="COG0093">
    <property type="taxonomic scope" value="Bacteria"/>
</dbReference>
<dbReference type="HOGENOM" id="CLU_095071_2_1_5"/>
<dbReference type="OrthoDB" id="9806379at2"/>
<dbReference type="Proteomes" id="UP000002528">
    <property type="component" value="Chromosome"/>
</dbReference>
<dbReference type="GO" id="GO:0022625">
    <property type="term" value="C:cytosolic large ribosomal subunit"/>
    <property type="evidence" value="ECO:0007669"/>
    <property type="project" value="TreeGrafter"/>
</dbReference>
<dbReference type="GO" id="GO:0070180">
    <property type="term" value="F:large ribosomal subunit rRNA binding"/>
    <property type="evidence" value="ECO:0007669"/>
    <property type="project" value="TreeGrafter"/>
</dbReference>
<dbReference type="GO" id="GO:0003735">
    <property type="term" value="F:structural constituent of ribosome"/>
    <property type="evidence" value="ECO:0007669"/>
    <property type="project" value="InterPro"/>
</dbReference>
<dbReference type="GO" id="GO:0006412">
    <property type="term" value="P:translation"/>
    <property type="evidence" value="ECO:0007669"/>
    <property type="project" value="UniProtKB-UniRule"/>
</dbReference>
<dbReference type="CDD" id="cd00337">
    <property type="entry name" value="Ribosomal_uL14"/>
    <property type="match status" value="1"/>
</dbReference>
<dbReference type="FunFam" id="2.40.150.20:FF:000001">
    <property type="entry name" value="50S ribosomal protein L14"/>
    <property type="match status" value="1"/>
</dbReference>
<dbReference type="Gene3D" id="2.40.150.20">
    <property type="entry name" value="Ribosomal protein L14"/>
    <property type="match status" value="1"/>
</dbReference>
<dbReference type="HAMAP" id="MF_01367">
    <property type="entry name" value="Ribosomal_uL14"/>
    <property type="match status" value="1"/>
</dbReference>
<dbReference type="InterPro" id="IPR000218">
    <property type="entry name" value="Ribosomal_uL14"/>
</dbReference>
<dbReference type="InterPro" id="IPR005745">
    <property type="entry name" value="Ribosomal_uL14_bac-type"/>
</dbReference>
<dbReference type="InterPro" id="IPR019972">
    <property type="entry name" value="Ribosomal_uL14_CS"/>
</dbReference>
<dbReference type="InterPro" id="IPR036853">
    <property type="entry name" value="Ribosomal_uL14_sf"/>
</dbReference>
<dbReference type="NCBIfam" id="TIGR01067">
    <property type="entry name" value="rplN_bact"/>
    <property type="match status" value="1"/>
</dbReference>
<dbReference type="PANTHER" id="PTHR11761">
    <property type="entry name" value="50S/60S RIBOSOMAL PROTEIN L14/L23"/>
    <property type="match status" value="1"/>
</dbReference>
<dbReference type="PANTHER" id="PTHR11761:SF3">
    <property type="entry name" value="LARGE RIBOSOMAL SUBUNIT PROTEIN UL14M"/>
    <property type="match status" value="1"/>
</dbReference>
<dbReference type="Pfam" id="PF00238">
    <property type="entry name" value="Ribosomal_L14"/>
    <property type="match status" value="1"/>
</dbReference>
<dbReference type="SMART" id="SM01374">
    <property type="entry name" value="Ribosomal_L14"/>
    <property type="match status" value="1"/>
</dbReference>
<dbReference type="SUPFAM" id="SSF50193">
    <property type="entry name" value="Ribosomal protein L14"/>
    <property type="match status" value="1"/>
</dbReference>
<dbReference type="PROSITE" id="PS00049">
    <property type="entry name" value="RIBOSOMAL_L14"/>
    <property type="match status" value="1"/>
</dbReference>
<sequence length="122" mass="13256">MIQVQTELLVADNTGAKRIECIKVLGGSKRRYASIGDTIVIAVKEALPKGKVKKGSVHKAVVVRVKKGIHREDGSKVRFDNNAAVLVDDKGEPVGTRIFGPVTRELRSRGQMKIISLAPEVL</sequence>